<keyword id="KW-0067">ATP-binding</keyword>
<keyword id="KW-0963">Cytoplasm</keyword>
<keyword id="KW-0460">Magnesium</keyword>
<keyword id="KW-0479">Metal-binding</keyword>
<keyword id="KW-0547">Nucleotide-binding</keyword>
<keyword id="KW-0554">One-carbon metabolism</keyword>
<keyword id="KW-0630">Potassium</keyword>
<keyword id="KW-1185">Reference proteome</keyword>
<keyword id="KW-0808">Transferase</keyword>
<accession>B7KFF5</accession>
<sequence>MTRRYLFTSESVTEGHPDKICDQISDTILDALLSQDPYSRVAAEVVVNTGLVLITGEITSKAQVNYVDLARQKIAEIGYTDSNNGFSANSCAVLVALDEQSPDISQGVTKAQERREQLSDDELDHIGAGDQGLMFGFACNETPELMPMPISLAHRIARRLAAVRKTGELPYLRPDGKTQVSVIYEDGKPVGIDTILISTQHTETLGQITDNAAIQKTIKDALWQAVVTPSFGDIEIKPDNNTKFLVNPTGKFVIGGPQGDSGLTGRKIIVDTYGGYSRHGGGAFSGKDPTKVDRSAAYACRHVAKNIVAAGLADKCEVQVSYAIGVARPVSIMIETFGTGKVSEEKLLEFVKEHFELRPAGIIQAYNLRHIPQERGRFYQDVAAYGHFGRTDLDLPWEKTDKVALLKDAFSQPAIVAG</sequence>
<gene>
    <name evidence="1" type="primary">metK</name>
    <name type="ordered locus">PCC7424_3478</name>
</gene>
<name>METK_GLOC7</name>
<dbReference type="EC" id="2.5.1.6" evidence="1"/>
<dbReference type="EMBL" id="CP001291">
    <property type="protein sequence ID" value="ACK71871.1"/>
    <property type="molecule type" value="Genomic_DNA"/>
</dbReference>
<dbReference type="RefSeq" id="WP_015955466.1">
    <property type="nucleotide sequence ID" value="NC_011729.1"/>
</dbReference>
<dbReference type="SMR" id="B7KFF5"/>
<dbReference type="STRING" id="65393.PCC7424_3478"/>
<dbReference type="KEGG" id="cyc:PCC7424_3478"/>
<dbReference type="eggNOG" id="COG0192">
    <property type="taxonomic scope" value="Bacteria"/>
</dbReference>
<dbReference type="HOGENOM" id="CLU_041802_1_1_3"/>
<dbReference type="OrthoDB" id="9801686at2"/>
<dbReference type="UniPathway" id="UPA00315">
    <property type="reaction ID" value="UER00080"/>
</dbReference>
<dbReference type="Proteomes" id="UP000002384">
    <property type="component" value="Chromosome"/>
</dbReference>
<dbReference type="GO" id="GO:0005737">
    <property type="term" value="C:cytoplasm"/>
    <property type="evidence" value="ECO:0007669"/>
    <property type="project" value="UniProtKB-SubCell"/>
</dbReference>
<dbReference type="GO" id="GO:0005524">
    <property type="term" value="F:ATP binding"/>
    <property type="evidence" value="ECO:0007669"/>
    <property type="project" value="UniProtKB-UniRule"/>
</dbReference>
<dbReference type="GO" id="GO:0000287">
    <property type="term" value="F:magnesium ion binding"/>
    <property type="evidence" value="ECO:0007669"/>
    <property type="project" value="UniProtKB-UniRule"/>
</dbReference>
<dbReference type="GO" id="GO:0004478">
    <property type="term" value="F:methionine adenosyltransferase activity"/>
    <property type="evidence" value="ECO:0007669"/>
    <property type="project" value="UniProtKB-UniRule"/>
</dbReference>
<dbReference type="GO" id="GO:0006730">
    <property type="term" value="P:one-carbon metabolic process"/>
    <property type="evidence" value="ECO:0007669"/>
    <property type="project" value="UniProtKB-KW"/>
</dbReference>
<dbReference type="GO" id="GO:0006556">
    <property type="term" value="P:S-adenosylmethionine biosynthetic process"/>
    <property type="evidence" value="ECO:0007669"/>
    <property type="project" value="UniProtKB-UniRule"/>
</dbReference>
<dbReference type="CDD" id="cd18079">
    <property type="entry name" value="S-AdoMet_synt"/>
    <property type="match status" value="1"/>
</dbReference>
<dbReference type="FunFam" id="3.30.300.10:FF:000003">
    <property type="entry name" value="S-adenosylmethionine synthase"/>
    <property type="match status" value="1"/>
</dbReference>
<dbReference type="Gene3D" id="3.30.300.10">
    <property type="match status" value="3"/>
</dbReference>
<dbReference type="HAMAP" id="MF_00086">
    <property type="entry name" value="S_AdoMet_synth1"/>
    <property type="match status" value="1"/>
</dbReference>
<dbReference type="InterPro" id="IPR022631">
    <property type="entry name" value="ADOMET_SYNTHASE_CS"/>
</dbReference>
<dbReference type="InterPro" id="IPR022630">
    <property type="entry name" value="S-AdoMet_synt_C"/>
</dbReference>
<dbReference type="InterPro" id="IPR022629">
    <property type="entry name" value="S-AdoMet_synt_central"/>
</dbReference>
<dbReference type="InterPro" id="IPR022628">
    <property type="entry name" value="S-AdoMet_synt_N"/>
</dbReference>
<dbReference type="InterPro" id="IPR002133">
    <property type="entry name" value="S-AdoMet_synthetase"/>
</dbReference>
<dbReference type="InterPro" id="IPR022636">
    <property type="entry name" value="S-AdoMet_synthetase_sfam"/>
</dbReference>
<dbReference type="NCBIfam" id="TIGR01034">
    <property type="entry name" value="metK"/>
    <property type="match status" value="1"/>
</dbReference>
<dbReference type="PANTHER" id="PTHR11964">
    <property type="entry name" value="S-ADENOSYLMETHIONINE SYNTHETASE"/>
    <property type="match status" value="1"/>
</dbReference>
<dbReference type="Pfam" id="PF02773">
    <property type="entry name" value="S-AdoMet_synt_C"/>
    <property type="match status" value="1"/>
</dbReference>
<dbReference type="Pfam" id="PF02772">
    <property type="entry name" value="S-AdoMet_synt_M"/>
    <property type="match status" value="1"/>
</dbReference>
<dbReference type="Pfam" id="PF00438">
    <property type="entry name" value="S-AdoMet_synt_N"/>
    <property type="match status" value="1"/>
</dbReference>
<dbReference type="PIRSF" id="PIRSF000497">
    <property type="entry name" value="MAT"/>
    <property type="match status" value="1"/>
</dbReference>
<dbReference type="SUPFAM" id="SSF55973">
    <property type="entry name" value="S-adenosylmethionine synthetase"/>
    <property type="match status" value="3"/>
</dbReference>
<dbReference type="PROSITE" id="PS00376">
    <property type="entry name" value="ADOMET_SYNTHASE_1"/>
    <property type="match status" value="1"/>
</dbReference>
<dbReference type="PROSITE" id="PS00377">
    <property type="entry name" value="ADOMET_SYNTHASE_2"/>
    <property type="match status" value="1"/>
</dbReference>
<evidence type="ECO:0000255" key="1">
    <source>
        <dbReference type="HAMAP-Rule" id="MF_00086"/>
    </source>
</evidence>
<proteinExistence type="inferred from homology"/>
<comment type="function">
    <text evidence="1">Catalyzes the formation of S-adenosylmethionine (AdoMet) from methionine and ATP. The overall synthetic reaction is composed of two sequential steps, AdoMet formation and the subsequent tripolyphosphate hydrolysis which occurs prior to release of AdoMet from the enzyme.</text>
</comment>
<comment type="catalytic activity">
    <reaction evidence="1">
        <text>L-methionine + ATP + H2O = S-adenosyl-L-methionine + phosphate + diphosphate</text>
        <dbReference type="Rhea" id="RHEA:21080"/>
        <dbReference type="ChEBI" id="CHEBI:15377"/>
        <dbReference type="ChEBI" id="CHEBI:30616"/>
        <dbReference type="ChEBI" id="CHEBI:33019"/>
        <dbReference type="ChEBI" id="CHEBI:43474"/>
        <dbReference type="ChEBI" id="CHEBI:57844"/>
        <dbReference type="ChEBI" id="CHEBI:59789"/>
        <dbReference type="EC" id="2.5.1.6"/>
    </reaction>
</comment>
<comment type="cofactor">
    <cofactor evidence="1">
        <name>Mg(2+)</name>
        <dbReference type="ChEBI" id="CHEBI:18420"/>
    </cofactor>
    <text evidence="1">Binds 2 divalent ions per subunit.</text>
</comment>
<comment type="cofactor">
    <cofactor evidence="1">
        <name>K(+)</name>
        <dbReference type="ChEBI" id="CHEBI:29103"/>
    </cofactor>
    <text evidence="1">Binds 1 potassium ion per subunit.</text>
</comment>
<comment type="pathway">
    <text evidence="1">Amino-acid biosynthesis; S-adenosyl-L-methionine biosynthesis; S-adenosyl-L-methionine from L-methionine: step 1/1.</text>
</comment>
<comment type="subunit">
    <text evidence="1">Homotetramer; dimer of dimers.</text>
</comment>
<comment type="subcellular location">
    <subcellularLocation>
        <location evidence="1">Cytoplasm</location>
    </subcellularLocation>
</comment>
<comment type="similarity">
    <text evidence="1">Belongs to the AdoMet synthase family.</text>
</comment>
<feature type="chain" id="PRO_1000196700" description="S-adenosylmethionine synthase">
    <location>
        <begin position="1"/>
        <end position="418"/>
    </location>
</feature>
<feature type="region of interest" description="Flexible loop" evidence="1">
    <location>
        <begin position="100"/>
        <end position="110"/>
    </location>
</feature>
<feature type="binding site" description="in other chain" evidence="1">
    <location>
        <position position="16"/>
    </location>
    <ligand>
        <name>ATP</name>
        <dbReference type="ChEBI" id="CHEBI:30616"/>
        <note>ligand shared between two neighboring subunits</note>
    </ligand>
</feature>
<feature type="binding site" evidence="1">
    <location>
        <position position="18"/>
    </location>
    <ligand>
        <name>Mg(2+)</name>
        <dbReference type="ChEBI" id="CHEBI:18420"/>
    </ligand>
</feature>
<feature type="binding site" evidence="1">
    <location>
        <position position="44"/>
    </location>
    <ligand>
        <name>K(+)</name>
        <dbReference type="ChEBI" id="CHEBI:29103"/>
    </ligand>
</feature>
<feature type="binding site" description="in other chain" evidence="1">
    <location>
        <position position="57"/>
    </location>
    <ligand>
        <name>L-methionine</name>
        <dbReference type="ChEBI" id="CHEBI:57844"/>
        <note>ligand shared between two neighboring subunits</note>
    </ligand>
</feature>
<feature type="binding site" description="in other chain" evidence="1">
    <location>
        <position position="100"/>
    </location>
    <ligand>
        <name>L-methionine</name>
        <dbReference type="ChEBI" id="CHEBI:57844"/>
        <note>ligand shared between two neighboring subunits</note>
    </ligand>
</feature>
<feature type="binding site" description="in other chain" evidence="1">
    <location>
        <begin position="175"/>
        <end position="177"/>
    </location>
    <ligand>
        <name>ATP</name>
        <dbReference type="ChEBI" id="CHEBI:30616"/>
        <note>ligand shared between two neighboring subunits</note>
    </ligand>
</feature>
<feature type="binding site" description="in other chain" evidence="1">
    <location>
        <begin position="251"/>
        <end position="252"/>
    </location>
    <ligand>
        <name>ATP</name>
        <dbReference type="ChEBI" id="CHEBI:30616"/>
        <note>ligand shared between two neighboring subunits</note>
    </ligand>
</feature>
<feature type="binding site" evidence="1">
    <location>
        <position position="260"/>
    </location>
    <ligand>
        <name>ATP</name>
        <dbReference type="ChEBI" id="CHEBI:30616"/>
        <note>ligand shared between two neighboring subunits</note>
    </ligand>
</feature>
<feature type="binding site" evidence="1">
    <location>
        <position position="260"/>
    </location>
    <ligand>
        <name>L-methionine</name>
        <dbReference type="ChEBI" id="CHEBI:57844"/>
        <note>ligand shared between two neighboring subunits</note>
    </ligand>
</feature>
<feature type="binding site" description="in other chain" evidence="1">
    <location>
        <begin position="266"/>
        <end position="267"/>
    </location>
    <ligand>
        <name>ATP</name>
        <dbReference type="ChEBI" id="CHEBI:30616"/>
        <note>ligand shared between two neighboring subunits</note>
    </ligand>
</feature>
<feature type="binding site" evidence="1">
    <location>
        <position position="283"/>
    </location>
    <ligand>
        <name>ATP</name>
        <dbReference type="ChEBI" id="CHEBI:30616"/>
        <note>ligand shared between two neighboring subunits</note>
    </ligand>
</feature>
<feature type="binding site" evidence="1">
    <location>
        <position position="287"/>
    </location>
    <ligand>
        <name>ATP</name>
        <dbReference type="ChEBI" id="CHEBI:30616"/>
        <note>ligand shared between two neighboring subunits</note>
    </ligand>
</feature>
<feature type="binding site" description="in other chain" evidence="1">
    <location>
        <position position="291"/>
    </location>
    <ligand>
        <name>L-methionine</name>
        <dbReference type="ChEBI" id="CHEBI:57844"/>
        <note>ligand shared between two neighboring subunits</note>
    </ligand>
</feature>
<protein>
    <recommendedName>
        <fullName evidence="1">S-adenosylmethionine synthase</fullName>
        <shortName evidence="1">AdoMet synthase</shortName>
        <ecNumber evidence="1">2.5.1.6</ecNumber>
    </recommendedName>
    <alternativeName>
        <fullName evidence="1">MAT</fullName>
    </alternativeName>
    <alternativeName>
        <fullName evidence="1">Methionine adenosyltransferase</fullName>
    </alternativeName>
</protein>
<reference key="1">
    <citation type="journal article" date="2011" name="MBio">
        <title>Novel metabolic attributes of the genus Cyanothece, comprising a group of unicellular nitrogen-fixing Cyanobacteria.</title>
        <authorList>
            <person name="Bandyopadhyay A."/>
            <person name="Elvitigala T."/>
            <person name="Welsh E."/>
            <person name="Stockel J."/>
            <person name="Liberton M."/>
            <person name="Min H."/>
            <person name="Sherman L.A."/>
            <person name="Pakrasi H.B."/>
        </authorList>
    </citation>
    <scope>NUCLEOTIDE SEQUENCE [LARGE SCALE GENOMIC DNA]</scope>
    <source>
        <strain>PCC 7424</strain>
    </source>
</reference>
<organism>
    <name type="scientific">Gloeothece citriformis (strain PCC 7424)</name>
    <name type="common">Cyanothece sp. (strain PCC 7424)</name>
    <dbReference type="NCBI Taxonomy" id="65393"/>
    <lineage>
        <taxon>Bacteria</taxon>
        <taxon>Bacillati</taxon>
        <taxon>Cyanobacteriota</taxon>
        <taxon>Cyanophyceae</taxon>
        <taxon>Oscillatoriophycideae</taxon>
        <taxon>Chroococcales</taxon>
        <taxon>Aphanothecaceae</taxon>
        <taxon>Gloeothece</taxon>
        <taxon>Gloeothece citriformis</taxon>
    </lineage>
</organism>